<comment type="function">
    <text evidence="1">Catalyzes the transfer of the diacylglyceryl group from phosphatidylglycerol to the sulfhydryl group of the N-terminal cysteine of a prolipoprotein, the first step in the formation of mature lipoproteins.</text>
</comment>
<comment type="catalytic activity">
    <reaction evidence="1">
        <text>L-cysteinyl-[prolipoprotein] + a 1,2-diacyl-sn-glycero-3-phospho-(1'-sn-glycerol) = an S-1,2-diacyl-sn-glyceryl-L-cysteinyl-[prolipoprotein] + sn-glycerol 1-phosphate + H(+)</text>
        <dbReference type="Rhea" id="RHEA:56712"/>
        <dbReference type="Rhea" id="RHEA-COMP:14679"/>
        <dbReference type="Rhea" id="RHEA-COMP:14680"/>
        <dbReference type="ChEBI" id="CHEBI:15378"/>
        <dbReference type="ChEBI" id="CHEBI:29950"/>
        <dbReference type="ChEBI" id="CHEBI:57685"/>
        <dbReference type="ChEBI" id="CHEBI:64716"/>
        <dbReference type="ChEBI" id="CHEBI:140658"/>
        <dbReference type="EC" id="2.5.1.145"/>
    </reaction>
</comment>
<comment type="pathway">
    <text evidence="1">Protein modification; lipoprotein biosynthesis (diacylglyceryl transfer).</text>
</comment>
<comment type="subcellular location">
    <subcellularLocation>
        <location evidence="1">Cell inner membrane</location>
        <topology evidence="1">Multi-pass membrane protein</topology>
    </subcellularLocation>
</comment>
<comment type="similarity">
    <text evidence="1">Belongs to the Lgt family.</text>
</comment>
<sequence>MALNFPNIDPVIVKFGPFDIFGQTFEPALRWYGFTYLVGFVAAMWLLNRQADRSNGLWSREQVSDLLFYGFLGVILGGRIGYVLFYHFDYFLASPMYLFKISEGGMSFHGGLIGVITAMIYITWKQKRTFFAVADMVAPVVPIGLGAGRIGNFINGELWGRVTDVPWAMVFPSGGPEPRHPSQLYQFALEGVALFLLLYWFSKRTKKVGAVSGMFLLGYGIFRVIVETVRQPDAQLGLYWGLMTMGQILSVPMILFGLYLILRPEGKQ</sequence>
<name>LGT_SHEON</name>
<gene>
    <name evidence="1" type="primary">lgt</name>
    <name type="ordered locus">SO_1334</name>
</gene>
<keyword id="KW-0997">Cell inner membrane</keyword>
<keyword id="KW-1003">Cell membrane</keyword>
<keyword id="KW-0472">Membrane</keyword>
<keyword id="KW-1185">Reference proteome</keyword>
<keyword id="KW-0808">Transferase</keyword>
<keyword id="KW-0812">Transmembrane</keyword>
<keyword id="KW-1133">Transmembrane helix</keyword>
<reference key="1">
    <citation type="journal article" date="2002" name="Nat. Biotechnol.">
        <title>Genome sequence of the dissimilatory metal ion-reducing bacterium Shewanella oneidensis.</title>
        <authorList>
            <person name="Heidelberg J.F."/>
            <person name="Paulsen I.T."/>
            <person name="Nelson K.E."/>
            <person name="Gaidos E.J."/>
            <person name="Nelson W.C."/>
            <person name="Read T.D."/>
            <person name="Eisen J.A."/>
            <person name="Seshadri R."/>
            <person name="Ward N.L."/>
            <person name="Methe B.A."/>
            <person name="Clayton R.A."/>
            <person name="Meyer T."/>
            <person name="Tsapin A."/>
            <person name="Scott J."/>
            <person name="Beanan M.J."/>
            <person name="Brinkac L.M."/>
            <person name="Daugherty S.C."/>
            <person name="DeBoy R.T."/>
            <person name="Dodson R.J."/>
            <person name="Durkin A.S."/>
            <person name="Haft D.H."/>
            <person name="Kolonay J.F."/>
            <person name="Madupu R."/>
            <person name="Peterson J.D."/>
            <person name="Umayam L.A."/>
            <person name="White O."/>
            <person name="Wolf A.M."/>
            <person name="Vamathevan J.J."/>
            <person name="Weidman J.F."/>
            <person name="Impraim M."/>
            <person name="Lee K."/>
            <person name="Berry K.J."/>
            <person name="Lee C."/>
            <person name="Mueller J."/>
            <person name="Khouri H.M."/>
            <person name="Gill J."/>
            <person name="Utterback T.R."/>
            <person name="McDonald L.A."/>
            <person name="Feldblyum T.V."/>
            <person name="Smith H.O."/>
            <person name="Venter J.C."/>
            <person name="Nealson K.H."/>
            <person name="Fraser C.M."/>
        </authorList>
    </citation>
    <scope>NUCLEOTIDE SEQUENCE [LARGE SCALE GENOMIC DNA]</scope>
    <source>
        <strain>ATCC 700550 / JCM 31522 / CIP 106686 / LMG 19005 / NCIMB 14063 / MR-1</strain>
    </source>
</reference>
<protein>
    <recommendedName>
        <fullName evidence="1">Phosphatidylglycerol--prolipoprotein diacylglyceryl transferase</fullName>
        <ecNumber evidence="1">2.5.1.145</ecNumber>
    </recommendedName>
</protein>
<feature type="chain" id="PRO_0000172669" description="Phosphatidylglycerol--prolipoprotein diacylglyceryl transferase">
    <location>
        <begin position="1"/>
        <end position="268"/>
    </location>
</feature>
<feature type="transmembrane region" description="Helical" evidence="1">
    <location>
        <begin position="27"/>
        <end position="47"/>
    </location>
</feature>
<feature type="transmembrane region" description="Helical" evidence="1">
    <location>
        <begin position="66"/>
        <end position="86"/>
    </location>
</feature>
<feature type="transmembrane region" description="Helical" evidence="1">
    <location>
        <begin position="104"/>
        <end position="124"/>
    </location>
</feature>
<feature type="transmembrane region" description="Helical" evidence="1">
    <location>
        <begin position="130"/>
        <end position="150"/>
    </location>
</feature>
<feature type="transmembrane region" description="Helical" evidence="1">
    <location>
        <begin position="181"/>
        <end position="201"/>
    </location>
</feature>
<feature type="transmembrane region" description="Helical" evidence="1">
    <location>
        <begin position="208"/>
        <end position="228"/>
    </location>
</feature>
<feature type="transmembrane region" description="Helical" evidence="1">
    <location>
        <begin position="242"/>
        <end position="262"/>
    </location>
</feature>
<feature type="binding site" evidence="1">
    <location>
        <position position="149"/>
    </location>
    <ligand>
        <name>a 1,2-diacyl-sn-glycero-3-phospho-(1'-sn-glycerol)</name>
        <dbReference type="ChEBI" id="CHEBI:64716"/>
    </ligand>
</feature>
<evidence type="ECO:0000255" key="1">
    <source>
        <dbReference type="HAMAP-Rule" id="MF_01147"/>
    </source>
</evidence>
<dbReference type="EC" id="2.5.1.145" evidence="1"/>
<dbReference type="EMBL" id="AE014299">
    <property type="protein sequence ID" value="AAN54399.1"/>
    <property type="molecule type" value="Genomic_DNA"/>
</dbReference>
<dbReference type="RefSeq" id="NP_716954.1">
    <property type="nucleotide sequence ID" value="NC_004347.2"/>
</dbReference>
<dbReference type="RefSeq" id="WP_011071543.1">
    <property type="nucleotide sequence ID" value="NC_004347.2"/>
</dbReference>
<dbReference type="SMR" id="Q8EH95"/>
<dbReference type="STRING" id="211586.SO_1334"/>
<dbReference type="PaxDb" id="211586-SO_1334"/>
<dbReference type="KEGG" id="son:SO_1334"/>
<dbReference type="PATRIC" id="fig|211586.12.peg.1284"/>
<dbReference type="eggNOG" id="COG0682">
    <property type="taxonomic scope" value="Bacteria"/>
</dbReference>
<dbReference type="HOGENOM" id="CLU_013386_1_0_6"/>
<dbReference type="OrthoDB" id="871140at2"/>
<dbReference type="PhylomeDB" id="Q8EH95"/>
<dbReference type="BioCyc" id="SONE211586:G1GMP-1232-MONOMER"/>
<dbReference type="UniPathway" id="UPA00664"/>
<dbReference type="Proteomes" id="UP000008186">
    <property type="component" value="Chromosome"/>
</dbReference>
<dbReference type="GO" id="GO:0005886">
    <property type="term" value="C:plasma membrane"/>
    <property type="evidence" value="ECO:0000318"/>
    <property type="project" value="GO_Central"/>
</dbReference>
<dbReference type="GO" id="GO:0008961">
    <property type="term" value="F:phosphatidylglycerol-prolipoprotein diacylglyceryl transferase activity"/>
    <property type="evidence" value="ECO:0000318"/>
    <property type="project" value="GO_Central"/>
</dbReference>
<dbReference type="GO" id="GO:0042158">
    <property type="term" value="P:lipoprotein biosynthetic process"/>
    <property type="evidence" value="ECO:0000318"/>
    <property type="project" value="GO_Central"/>
</dbReference>
<dbReference type="HAMAP" id="MF_01147">
    <property type="entry name" value="Lgt"/>
    <property type="match status" value="1"/>
</dbReference>
<dbReference type="InterPro" id="IPR001640">
    <property type="entry name" value="Lgt"/>
</dbReference>
<dbReference type="NCBIfam" id="TIGR00544">
    <property type="entry name" value="lgt"/>
    <property type="match status" value="1"/>
</dbReference>
<dbReference type="PANTHER" id="PTHR30589:SF0">
    <property type="entry name" value="PHOSPHATIDYLGLYCEROL--PROLIPOPROTEIN DIACYLGLYCERYL TRANSFERASE"/>
    <property type="match status" value="1"/>
</dbReference>
<dbReference type="PANTHER" id="PTHR30589">
    <property type="entry name" value="PROLIPOPROTEIN DIACYLGLYCERYL TRANSFERASE"/>
    <property type="match status" value="1"/>
</dbReference>
<dbReference type="Pfam" id="PF01790">
    <property type="entry name" value="LGT"/>
    <property type="match status" value="1"/>
</dbReference>
<dbReference type="PROSITE" id="PS01311">
    <property type="entry name" value="LGT"/>
    <property type="match status" value="1"/>
</dbReference>
<organism>
    <name type="scientific">Shewanella oneidensis (strain ATCC 700550 / JCM 31522 / CIP 106686 / LMG 19005 / NCIMB 14063 / MR-1)</name>
    <dbReference type="NCBI Taxonomy" id="211586"/>
    <lineage>
        <taxon>Bacteria</taxon>
        <taxon>Pseudomonadati</taxon>
        <taxon>Pseudomonadota</taxon>
        <taxon>Gammaproteobacteria</taxon>
        <taxon>Alteromonadales</taxon>
        <taxon>Shewanellaceae</taxon>
        <taxon>Shewanella</taxon>
    </lineage>
</organism>
<proteinExistence type="inferred from homology"/>
<accession>Q8EH95</accession>